<organism>
    <name type="scientific">Pseudomonas putida (strain ATCC 47054 / DSM 6125 / CFBP 8728 / NCIMB 11950 / KT2440)</name>
    <dbReference type="NCBI Taxonomy" id="160488"/>
    <lineage>
        <taxon>Bacteria</taxon>
        <taxon>Pseudomonadati</taxon>
        <taxon>Pseudomonadota</taxon>
        <taxon>Gammaproteobacteria</taxon>
        <taxon>Pseudomonadales</taxon>
        <taxon>Pseudomonadaceae</taxon>
        <taxon>Pseudomonas</taxon>
    </lineage>
</organism>
<dbReference type="EC" id="4.1.99.22" evidence="1"/>
<dbReference type="EMBL" id="AE015451">
    <property type="protein sequence ID" value="AAN70170.1"/>
    <property type="molecule type" value="Genomic_DNA"/>
</dbReference>
<dbReference type="RefSeq" id="NP_746706.1">
    <property type="nucleotide sequence ID" value="NC_002947.4"/>
</dbReference>
<dbReference type="RefSeq" id="WP_003254695.1">
    <property type="nucleotide sequence ID" value="NZ_CP169744.1"/>
</dbReference>
<dbReference type="SMR" id="Q88E69"/>
<dbReference type="STRING" id="160488.PP_4597"/>
<dbReference type="PaxDb" id="160488-PP_4597"/>
<dbReference type="GeneID" id="83678693"/>
<dbReference type="KEGG" id="ppu:PP_4597"/>
<dbReference type="PATRIC" id="fig|160488.4.peg.4901"/>
<dbReference type="eggNOG" id="COG2896">
    <property type="taxonomic scope" value="Bacteria"/>
</dbReference>
<dbReference type="HOGENOM" id="CLU_009273_0_1_6"/>
<dbReference type="OrthoDB" id="9763993at2"/>
<dbReference type="PhylomeDB" id="Q88E69"/>
<dbReference type="BioCyc" id="PPUT160488:G1G01-4905-MONOMER"/>
<dbReference type="UniPathway" id="UPA00344"/>
<dbReference type="Proteomes" id="UP000000556">
    <property type="component" value="Chromosome"/>
</dbReference>
<dbReference type="GO" id="GO:0051539">
    <property type="term" value="F:4 iron, 4 sulfur cluster binding"/>
    <property type="evidence" value="ECO:0007669"/>
    <property type="project" value="UniProtKB-UniRule"/>
</dbReference>
<dbReference type="GO" id="GO:0061799">
    <property type="term" value="F:cyclic pyranopterin monophosphate synthase activity"/>
    <property type="evidence" value="ECO:0007669"/>
    <property type="project" value="TreeGrafter"/>
</dbReference>
<dbReference type="GO" id="GO:0061798">
    <property type="term" value="F:GTP 3',8'-cyclase activity"/>
    <property type="evidence" value="ECO:0007669"/>
    <property type="project" value="UniProtKB-UniRule"/>
</dbReference>
<dbReference type="GO" id="GO:0005525">
    <property type="term" value="F:GTP binding"/>
    <property type="evidence" value="ECO:0007669"/>
    <property type="project" value="UniProtKB-UniRule"/>
</dbReference>
<dbReference type="GO" id="GO:0046872">
    <property type="term" value="F:metal ion binding"/>
    <property type="evidence" value="ECO:0007669"/>
    <property type="project" value="UniProtKB-KW"/>
</dbReference>
<dbReference type="GO" id="GO:1904047">
    <property type="term" value="F:S-adenosyl-L-methionine binding"/>
    <property type="evidence" value="ECO:0007669"/>
    <property type="project" value="UniProtKB-UniRule"/>
</dbReference>
<dbReference type="GO" id="GO:0006777">
    <property type="term" value="P:Mo-molybdopterin cofactor biosynthetic process"/>
    <property type="evidence" value="ECO:0007669"/>
    <property type="project" value="UniProtKB-UniRule"/>
</dbReference>
<dbReference type="CDD" id="cd01335">
    <property type="entry name" value="Radical_SAM"/>
    <property type="match status" value="1"/>
</dbReference>
<dbReference type="CDD" id="cd21117">
    <property type="entry name" value="Twitch_MoaA"/>
    <property type="match status" value="1"/>
</dbReference>
<dbReference type="Gene3D" id="3.20.20.70">
    <property type="entry name" value="Aldolase class I"/>
    <property type="match status" value="1"/>
</dbReference>
<dbReference type="HAMAP" id="MF_01225_B">
    <property type="entry name" value="MoaA_B"/>
    <property type="match status" value="1"/>
</dbReference>
<dbReference type="InterPro" id="IPR013785">
    <property type="entry name" value="Aldolase_TIM"/>
</dbReference>
<dbReference type="InterPro" id="IPR006638">
    <property type="entry name" value="Elp3/MiaA/NifB-like_rSAM"/>
</dbReference>
<dbReference type="InterPro" id="IPR013483">
    <property type="entry name" value="MoaA"/>
</dbReference>
<dbReference type="InterPro" id="IPR000385">
    <property type="entry name" value="MoaA_NifB_PqqE_Fe-S-bd_CS"/>
</dbReference>
<dbReference type="InterPro" id="IPR010505">
    <property type="entry name" value="MoaA_twitch"/>
</dbReference>
<dbReference type="InterPro" id="IPR050105">
    <property type="entry name" value="MoCo_biosynth_MoaA/MoaC"/>
</dbReference>
<dbReference type="InterPro" id="IPR007197">
    <property type="entry name" value="rSAM"/>
</dbReference>
<dbReference type="NCBIfam" id="TIGR02666">
    <property type="entry name" value="moaA"/>
    <property type="match status" value="1"/>
</dbReference>
<dbReference type="PANTHER" id="PTHR22960:SF0">
    <property type="entry name" value="MOLYBDENUM COFACTOR BIOSYNTHESIS PROTEIN 1"/>
    <property type="match status" value="1"/>
</dbReference>
<dbReference type="PANTHER" id="PTHR22960">
    <property type="entry name" value="MOLYBDOPTERIN COFACTOR SYNTHESIS PROTEIN A"/>
    <property type="match status" value="1"/>
</dbReference>
<dbReference type="Pfam" id="PF13353">
    <property type="entry name" value="Fer4_12"/>
    <property type="match status" value="1"/>
</dbReference>
<dbReference type="Pfam" id="PF06463">
    <property type="entry name" value="Mob_synth_C"/>
    <property type="match status" value="1"/>
</dbReference>
<dbReference type="Pfam" id="PF04055">
    <property type="entry name" value="Radical_SAM"/>
    <property type="match status" value="1"/>
</dbReference>
<dbReference type="SFLD" id="SFLDG01383">
    <property type="entry name" value="cyclic_pyranopterin_phosphate"/>
    <property type="match status" value="1"/>
</dbReference>
<dbReference type="SFLD" id="SFLDS00029">
    <property type="entry name" value="Radical_SAM"/>
    <property type="match status" value="1"/>
</dbReference>
<dbReference type="SMART" id="SM00729">
    <property type="entry name" value="Elp3"/>
    <property type="match status" value="1"/>
</dbReference>
<dbReference type="SUPFAM" id="SSF102114">
    <property type="entry name" value="Radical SAM enzymes"/>
    <property type="match status" value="1"/>
</dbReference>
<dbReference type="PROSITE" id="PS01305">
    <property type="entry name" value="MOAA_NIFB_PQQE"/>
    <property type="match status" value="1"/>
</dbReference>
<dbReference type="PROSITE" id="PS51918">
    <property type="entry name" value="RADICAL_SAM"/>
    <property type="match status" value="1"/>
</dbReference>
<accession>Q88E69</accession>
<feature type="chain" id="PRO_0000152982" description="GTP 3',8-cyclase">
    <location>
        <begin position="1"/>
        <end position="334"/>
    </location>
</feature>
<feature type="domain" description="Radical SAM core" evidence="2">
    <location>
        <begin position="11"/>
        <end position="236"/>
    </location>
</feature>
<feature type="binding site" evidence="1">
    <location>
        <position position="20"/>
    </location>
    <ligand>
        <name>GTP</name>
        <dbReference type="ChEBI" id="CHEBI:37565"/>
    </ligand>
</feature>
<feature type="binding site" evidence="1">
    <location>
        <position position="27"/>
    </location>
    <ligand>
        <name>[4Fe-4S] cluster</name>
        <dbReference type="ChEBI" id="CHEBI:49883"/>
        <label>1</label>
        <note>4Fe-4S-S-AdoMet</note>
    </ligand>
</feature>
<feature type="binding site" evidence="1">
    <location>
        <position position="31"/>
    </location>
    <ligand>
        <name>[4Fe-4S] cluster</name>
        <dbReference type="ChEBI" id="CHEBI:49883"/>
        <label>1</label>
        <note>4Fe-4S-S-AdoMet</note>
    </ligand>
</feature>
<feature type="binding site" evidence="1">
    <location>
        <position position="33"/>
    </location>
    <ligand>
        <name>S-adenosyl-L-methionine</name>
        <dbReference type="ChEBI" id="CHEBI:59789"/>
    </ligand>
</feature>
<feature type="binding site" evidence="1">
    <location>
        <position position="34"/>
    </location>
    <ligand>
        <name>[4Fe-4S] cluster</name>
        <dbReference type="ChEBI" id="CHEBI:49883"/>
        <label>1</label>
        <note>4Fe-4S-S-AdoMet</note>
    </ligand>
</feature>
<feature type="binding site" evidence="1">
    <location>
        <position position="69"/>
    </location>
    <ligand>
        <name>GTP</name>
        <dbReference type="ChEBI" id="CHEBI:37565"/>
    </ligand>
</feature>
<feature type="binding site" evidence="1">
    <location>
        <position position="73"/>
    </location>
    <ligand>
        <name>S-adenosyl-L-methionine</name>
        <dbReference type="ChEBI" id="CHEBI:59789"/>
    </ligand>
</feature>
<feature type="binding site" evidence="1">
    <location>
        <position position="100"/>
    </location>
    <ligand>
        <name>GTP</name>
        <dbReference type="ChEBI" id="CHEBI:37565"/>
    </ligand>
</feature>
<feature type="binding site" evidence="1">
    <location>
        <position position="124"/>
    </location>
    <ligand>
        <name>S-adenosyl-L-methionine</name>
        <dbReference type="ChEBI" id="CHEBI:59789"/>
    </ligand>
</feature>
<feature type="binding site" evidence="1">
    <location>
        <position position="161"/>
    </location>
    <ligand>
        <name>GTP</name>
        <dbReference type="ChEBI" id="CHEBI:37565"/>
    </ligand>
</feature>
<feature type="binding site" evidence="1">
    <location>
        <position position="195"/>
    </location>
    <ligand>
        <name>S-adenosyl-L-methionine</name>
        <dbReference type="ChEBI" id="CHEBI:59789"/>
    </ligand>
</feature>
<feature type="binding site" evidence="1">
    <location>
        <position position="260"/>
    </location>
    <ligand>
        <name>[4Fe-4S] cluster</name>
        <dbReference type="ChEBI" id="CHEBI:49883"/>
        <label>2</label>
        <note>4Fe-4S-substrate</note>
    </ligand>
</feature>
<feature type="binding site" evidence="1">
    <location>
        <position position="263"/>
    </location>
    <ligand>
        <name>[4Fe-4S] cluster</name>
        <dbReference type="ChEBI" id="CHEBI:49883"/>
        <label>2</label>
        <note>4Fe-4S-substrate</note>
    </ligand>
</feature>
<feature type="binding site" evidence="1">
    <location>
        <begin position="265"/>
        <end position="267"/>
    </location>
    <ligand>
        <name>GTP</name>
        <dbReference type="ChEBI" id="CHEBI:37565"/>
    </ligand>
</feature>
<feature type="binding site" evidence="1">
    <location>
        <position position="277"/>
    </location>
    <ligand>
        <name>[4Fe-4S] cluster</name>
        <dbReference type="ChEBI" id="CHEBI:49883"/>
        <label>2</label>
        <note>4Fe-4S-substrate</note>
    </ligand>
</feature>
<protein>
    <recommendedName>
        <fullName evidence="1">GTP 3',8-cyclase</fullName>
        <ecNumber evidence="1">4.1.99.22</ecNumber>
    </recommendedName>
    <alternativeName>
        <fullName evidence="1">Molybdenum cofactor biosynthesis protein A</fullName>
    </alternativeName>
</protein>
<sequence>MEQNSRALIDGFNRKIDYLRMSVTDRCDFRCVYCMAEDMQFLPRQQILSLEELFQVAERFVALGTRKIRLTGGEPLVRQGIVDLCGRIAALPGLRELCLTSNGSQLGRLAQPLFDAGVTRLNISLDSLDADRFKQLTRTGDLAQVIAGIDAARQAGFKRTKLNCVVLKGRNDHELVDLVRFAIERELDITFIEEMPLGVISEHERGESFCSSDEVRARLAEQFTLVESTESSMGPARYWRLAEAANTRVGFISPHSHNFCATCNRVRLTVEGRLLLCLGNEHSVDLKHVLRAHPGNPERLEKAIRDSLHLKPYRHHFEVGGDVQILRFMNMTGG</sequence>
<evidence type="ECO:0000255" key="1">
    <source>
        <dbReference type="HAMAP-Rule" id="MF_01225"/>
    </source>
</evidence>
<evidence type="ECO:0000255" key="2">
    <source>
        <dbReference type="PROSITE-ProRule" id="PRU01266"/>
    </source>
</evidence>
<name>MOAA_PSEPK</name>
<comment type="function">
    <text evidence="1">Catalyzes the cyclization of GTP to (8S)-3',8-cyclo-7,8-dihydroguanosine 5'-triphosphate.</text>
</comment>
<comment type="catalytic activity">
    <reaction evidence="1">
        <text>GTP + AH2 + S-adenosyl-L-methionine = (8S)-3',8-cyclo-7,8-dihydroguanosine 5'-triphosphate + 5'-deoxyadenosine + L-methionine + A + H(+)</text>
        <dbReference type="Rhea" id="RHEA:49576"/>
        <dbReference type="ChEBI" id="CHEBI:13193"/>
        <dbReference type="ChEBI" id="CHEBI:15378"/>
        <dbReference type="ChEBI" id="CHEBI:17319"/>
        <dbReference type="ChEBI" id="CHEBI:17499"/>
        <dbReference type="ChEBI" id="CHEBI:37565"/>
        <dbReference type="ChEBI" id="CHEBI:57844"/>
        <dbReference type="ChEBI" id="CHEBI:59789"/>
        <dbReference type="ChEBI" id="CHEBI:131766"/>
        <dbReference type="EC" id="4.1.99.22"/>
    </reaction>
</comment>
<comment type="cofactor">
    <cofactor evidence="1">
        <name>[4Fe-4S] cluster</name>
        <dbReference type="ChEBI" id="CHEBI:49883"/>
    </cofactor>
    <text evidence="1">Binds 2 [4Fe-4S] clusters. Binds 1 [4Fe-4S] cluster coordinated with 3 cysteines and an exchangeable S-adenosyl-L-methionine and 1 [4Fe-4S] cluster coordinated with 3 cysteines and the GTP-derived substrate.</text>
</comment>
<comment type="pathway">
    <text evidence="1">Cofactor biosynthesis; molybdopterin biosynthesis.</text>
</comment>
<comment type="subunit">
    <text evidence="1">Monomer and homodimer.</text>
</comment>
<comment type="similarity">
    <text evidence="1">Belongs to the radical SAM superfamily. MoaA family.</text>
</comment>
<proteinExistence type="inferred from homology"/>
<reference key="1">
    <citation type="journal article" date="2002" name="Environ. Microbiol.">
        <title>Complete genome sequence and comparative analysis of the metabolically versatile Pseudomonas putida KT2440.</title>
        <authorList>
            <person name="Nelson K.E."/>
            <person name="Weinel C."/>
            <person name="Paulsen I.T."/>
            <person name="Dodson R.J."/>
            <person name="Hilbert H."/>
            <person name="Martins dos Santos V.A.P."/>
            <person name="Fouts D.E."/>
            <person name="Gill S.R."/>
            <person name="Pop M."/>
            <person name="Holmes M."/>
            <person name="Brinkac L.M."/>
            <person name="Beanan M.J."/>
            <person name="DeBoy R.T."/>
            <person name="Daugherty S.C."/>
            <person name="Kolonay J.F."/>
            <person name="Madupu R."/>
            <person name="Nelson W.C."/>
            <person name="White O."/>
            <person name="Peterson J.D."/>
            <person name="Khouri H.M."/>
            <person name="Hance I."/>
            <person name="Chris Lee P."/>
            <person name="Holtzapple E.K."/>
            <person name="Scanlan D."/>
            <person name="Tran K."/>
            <person name="Moazzez A."/>
            <person name="Utterback T.R."/>
            <person name="Rizzo M."/>
            <person name="Lee K."/>
            <person name="Kosack D."/>
            <person name="Moestl D."/>
            <person name="Wedler H."/>
            <person name="Lauber J."/>
            <person name="Stjepandic D."/>
            <person name="Hoheisel J."/>
            <person name="Straetz M."/>
            <person name="Heim S."/>
            <person name="Kiewitz C."/>
            <person name="Eisen J.A."/>
            <person name="Timmis K.N."/>
            <person name="Duesterhoeft A."/>
            <person name="Tuemmler B."/>
            <person name="Fraser C.M."/>
        </authorList>
    </citation>
    <scope>NUCLEOTIDE SEQUENCE [LARGE SCALE GENOMIC DNA]</scope>
    <source>
        <strain>ATCC 47054 / DSM 6125 / CFBP 8728 / NCIMB 11950 / KT2440</strain>
    </source>
</reference>
<keyword id="KW-0004">4Fe-4S</keyword>
<keyword id="KW-0342">GTP-binding</keyword>
<keyword id="KW-0408">Iron</keyword>
<keyword id="KW-0411">Iron-sulfur</keyword>
<keyword id="KW-0456">Lyase</keyword>
<keyword id="KW-0479">Metal-binding</keyword>
<keyword id="KW-0501">Molybdenum cofactor biosynthesis</keyword>
<keyword id="KW-0547">Nucleotide-binding</keyword>
<keyword id="KW-1185">Reference proteome</keyword>
<keyword id="KW-0949">S-adenosyl-L-methionine</keyword>
<gene>
    <name evidence="1" type="primary">moaA</name>
    <name type="ordered locus">PP_4597</name>
</gene>